<sequence>MAIRSKAWISLLLALAVALSARAEEEPAAAAEGEAVLTLDVDSFDEAVAKHPFMVVEFYAPWCGHCKKLAPEYENAAKALSKHDPPIVLAKVDANEEKNRPLATKYEIQGFPTIKIFRDRGKNIQEYKGPREADGIVDYLKKQVGPASKEIKSPEDATALIDDKKIYIVGIFAEFSGTEFTNFMEVAEKLRSDYDFGHTLHANHLPRGDAAVERPLVRLLKPFDELVVDSKDFDVAALMKFIDASTIPRVVTFDKNPDNHPYLMKFFQSSAPKAMLFLNFSTGPFDSFKSAYSAAAEEFKDKEIKFLIGDIEASQGAFQYFGLKEDQTPLILIQDGDSKKFLKVHVEADQIVAWLKEYFDGKLTPFRNSEPIPEVNNEPVKVVVADNVHDFVFKSGKNVLIEFYAPWCGHCKKLAPILDEAATTLQSDEEVVIAKMDATANDVPSEFDVQGYPTLYFVTPSGKVTSYDSGRTADDIVDFIKKSKETAAPHHHHHPGATGIREGSRAEPVKDEL</sequence>
<comment type="function">
    <text evidence="1">Participates in the folding of proteins containing disulfide bonds, may be involved in glycosylation, prolyl hydroxylation and triglyceride transfer.</text>
</comment>
<comment type="catalytic activity">
    <reaction>
        <text>Catalyzes the rearrangement of -S-S- bonds in proteins.</text>
        <dbReference type="EC" id="5.3.4.1"/>
    </reaction>
</comment>
<comment type="subcellular location">
    <subcellularLocation>
        <location evidence="4">Endoplasmic reticulum lumen</location>
    </subcellularLocation>
</comment>
<comment type="similarity">
    <text evidence="6">Belongs to the protein disulfide isomerase family.</text>
</comment>
<evidence type="ECO:0000250" key="1"/>
<evidence type="ECO:0000255" key="2"/>
<evidence type="ECO:0000255" key="3">
    <source>
        <dbReference type="PROSITE-ProRule" id="PRU00691"/>
    </source>
</evidence>
<evidence type="ECO:0000255" key="4">
    <source>
        <dbReference type="PROSITE-ProRule" id="PRU10138"/>
    </source>
</evidence>
<evidence type="ECO:0000256" key="5">
    <source>
        <dbReference type="SAM" id="MobiDB-lite"/>
    </source>
</evidence>
<evidence type="ECO:0000305" key="6"/>
<gene>
    <name type="primary">PDI</name>
</gene>
<proteinExistence type="evidence at transcript level"/>
<organism>
    <name type="scientific">Zea mays</name>
    <name type="common">Maize</name>
    <dbReference type="NCBI Taxonomy" id="4577"/>
    <lineage>
        <taxon>Eukaryota</taxon>
        <taxon>Viridiplantae</taxon>
        <taxon>Streptophyta</taxon>
        <taxon>Embryophyta</taxon>
        <taxon>Tracheophyta</taxon>
        <taxon>Spermatophyta</taxon>
        <taxon>Magnoliopsida</taxon>
        <taxon>Liliopsida</taxon>
        <taxon>Poales</taxon>
        <taxon>Poaceae</taxon>
        <taxon>PACMAD clade</taxon>
        <taxon>Panicoideae</taxon>
        <taxon>Andropogonodae</taxon>
        <taxon>Andropogoneae</taxon>
        <taxon>Tripsacinae</taxon>
        <taxon>Zea</taxon>
    </lineage>
</organism>
<accession>P52588</accession>
<protein>
    <recommendedName>
        <fullName>Protein disulfide-isomerase</fullName>
        <shortName>PDI</shortName>
        <ecNumber>5.3.4.1</ecNumber>
    </recommendedName>
</protein>
<reference key="1">
    <citation type="journal article" date="1996" name="Plant Mol. Biol.">
        <title>Expression of protein disulfide isomerase is elevated in the endosperm of the maize floury-2 mutant.</title>
        <authorList>
            <person name="Li C.P."/>
            <person name="Larkins B.A."/>
        </authorList>
    </citation>
    <scope>NUCLEOTIDE SEQUENCE [MRNA]</scope>
    <source>
        <strain>cv. Wisconsin 64A</strain>
        <tissue>Endosperm</tissue>
    </source>
</reference>
<name>PDI_MAIZE</name>
<feature type="signal peptide" evidence="1">
    <location>
        <begin position="1"/>
        <end position="23"/>
    </location>
</feature>
<feature type="chain" id="PRO_0000034210" description="Protein disulfide-isomerase">
    <location>
        <begin position="24"/>
        <end position="513"/>
    </location>
</feature>
<feature type="domain" description="Thioredoxin 1" evidence="3">
    <location>
        <begin position="24"/>
        <end position="145"/>
    </location>
</feature>
<feature type="domain" description="Thioredoxin 2" evidence="3">
    <location>
        <begin position="366"/>
        <end position="485"/>
    </location>
</feature>
<feature type="region of interest" description="Disordered" evidence="5">
    <location>
        <begin position="485"/>
        <end position="513"/>
    </location>
</feature>
<feature type="short sequence motif" description="Prevents secretion from ER" evidence="4">
    <location>
        <begin position="510"/>
        <end position="513"/>
    </location>
</feature>
<feature type="compositionally biased region" description="Basic and acidic residues" evidence="5">
    <location>
        <begin position="502"/>
        <end position="513"/>
    </location>
</feature>
<feature type="active site" description="Nucleophile" evidence="1">
    <location>
        <position position="63"/>
    </location>
</feature>
<feature type="active site" description="Nucleophile" evidence="1">
    <location>
        <position position="66"/>
    </location>
</feature>
<feature type="active site" description="Nucleophile" evidence="1">
    <location>
        <position position="408"/>
    </location>
</feature>
<feature type="active site" description="Nucleophile" evidence="1">
    <location>
        <position position="411"/>
    </location>
</feature>
<feature type="site" description="Contributes to redox potential value" evidence="1">
    <location>
        <position position="64"/>
    </location>
</feature>
<feature type="site" description="Contributes to redox potential value" evidence="1">
    <location>
        <position position="65"/>
    </location>
</feature>
<feature type="site" description="Lowers pKa of C-terminal Cys of first active site" evidence="1">
    <location>
        <position position="131"/>
    </location>
</feature>
<feature type="site" description="Contributes to redox potential value" evidence="1">
    <location>
        <position position="409"/>
    </location>
</feature>
<feature type="site" description="Contributes to redox potential value" evidence="1">
    <location>
        <position position="410"/>
    </location>
</feature>
<feature type="site" description="Lowers pKa of C-terminal Cys of second active site" evidence="1">
    <location>
        <position position="471"/>
    </location>
</feature>
<feature type="glycosylation site" description="N-linked (GlcNAc...) asparagine" evidence="2">
    <location>
        <position position="279"/>
    </location>
</feature>
<feature type="disulfide bond" description="Redox-active" evidence="3">
    <location>
        <begin position="63"/>
        <end position="66"/>
    </location>
</feature>
<feature type="disulfide bond" description="Redox-active" evidence="3">
    <location>
        <begin position="408"/>
        <end position="411"/>
    </location>
</feature>
<dbReference type="EC" id="5.3.4.1"/>
<dbReference type="EMBL" id="L39014">
    <property type="protein sequence ID" value="AAB08519.1"/>
    <property type="molecule type" value="mRNA"/>
</dbReference>
<dbReference type="PIR" id="S69181">
    <property type="entry name" value="S69181"/>
</dbReference>
<dbReference type="SMR" id="P52588"/>
<dbReference type="FunCoup" id="P52588">
    <property type="interactions" value="2692"/>
</dbReference>
<dbReference type="STRING" id="4577.P52588"/>
<dbReference type="GlyCosmos" id="P52588">
    <property type="glycosylation" value="1 site, No reported glycans"/>
</dbReference>
<dbReference type="PaxDb" id="4577-GRMZM2G091481_P01"/>
<dbReference type="MaizeGDB" id="86830"/>
<dbReference type="eggNOG" id="KOG0190">
    <property type="taxonomic scope" value="Eukaryota"/>
</dbReference>
<dbReference type="InParanoid" id="P52588"/>
<dbReference type="Proteomes" id="UP000007305">
    <property type="component" value="Unplaced"/>
</dbReference>
<dbReference type="ExpressionAtlas" id="P52588">
    <property type="expression patterns" value="baseline and differential"/>
</dbReference>
<dbReference type="GO" id="GO:0005783">
    <property type="term" value="C:endoplasmic reticulum"/>
    <property type="evidence" value="ECO:0000318"/>
    <property type="project" value="GO_Central"/>
</dbReference>
<dbReference type="GO" id="GO:0005788">
    <property type="term" value="C:endoplasmic reticulum lumen"/>
    <property type="evidence" value="ECO:0007669"/>
    <property type="project" value="UniProtKB-SubCell"/>
</dbReference>
<dbReference type="GO" id="GO:0003756">
    <property type="term" value="F:protein disulfide isomerase activity"/>
    <property type="evidence" value="ECO:0000318"/>
    <property type="project" value="GO_Central"/>
</dbReference>
<dbReference type="GO" id="GO:0006457">
    <property type="term" value="P:protein folding"/>
    <property type="evidence" value="ECO:0000318"/>
    <property type="project" value="GO_Central"/>
</dbReference>
<dbReference type="GO" id="GO:0034976">
    <property type="term" value="P:response to endoplasmic reticulum stress"/>
    <property type="evidence" value="ECO:0000318"/>
    <property type="project" value="GO_Central"/>
</dbReference>
<dbReference type="CDD" id="cd02961">
    <property type="entry name" value="PDI_a_family"/>
    <property type="match status" value="1"/>
</dbReference>
<dbReference type="CDD" id="cd02995">
    <property type="entry name" value="PDI_a_PDI_a'_C"/>
    <property type="match status" value="1"/>
</dbReference>
<dbReference type="CDD" id="cd02982">
    <property type="entry name" value="PDI_b'_family"/>
    <property type="match status" value="1"/>
</dbReference>
<dbReference type="CDD" id="cd02981">
    <property type="entry name" value="PDI_b_family"/>
    <property type="match status" value="1"/>
</dbReference>
<dbReference type="FunFam" id="3.40.30.10:FF:000143">
    <property type="entry name" value="Protein disulfide-isomerase"/>
    <property type="match status" value="1"/>
</dbReference>
<dbReference type="FunFam" id="3.40.30.10:FF:000150">
    <property type="entry name" value="Protein disulfide-isomerase"/>
    <property type="match status" value="1"/>
</dbReference>
<dbReference type="FunFam" id="3.40.30.10:FF:000152">
    <property type="entry name" value="Protein disulfide-isomerase"/>
    <property type="match status" value="1"/>
</dbReference>
<dbReference type="FunFam" id="3.40.30.10:FF:000184">
    <property type="entry name" value="Protein disulfide-isomerase"/>
    <property type="match status" value="1"/>
</dbReference>
<dbReference type="Gene3D" id="3.40.30.10">
    <property type="entry name" value="Glutaredoxin"/>
    <property type="match status" value="4"/>
</dbReference>
<dbReference type="InterPro" id="IPR005788">
    <property type="entry name" value="PDI_thioredoxin-like_dom"/>
</dbReference>
<dbReference type="InterPro" id="IPR005792">
    <property type="entry name" value="Prot_disulphide_isomerase"/>
</dbReference>
<dbReference type="InterPro" id="IPR036249">
    <property type="entry name" value="Thioredoxin-like_sf"/>
</dbReference>
<dbReference type="InterPro" id="IPR017937">
    <property type="entry name" value="Thioredoxin_CS"/>
</dbReference>
<dbReference type="InterPro" id="IPR013766">
    <property type="entry name" value="Thioredoxin_domain"/>
</dbReference>
<dbReference type="NCBIfam" id="TIGR01130">
    <property type="entry name" value="ER_PDI_fam"/>
    <property type="match status" value="1"/>
</dbReference>
<dbReference type="NCBIfam" id="TIGR01126">
    <property type="entry name" value="pdi_dom"/>
    <property type="match status" value="2"/>
</dbReference>
<dbReference type="PANTHER" id="PTHR18929">
    <property type="entry name" value="PROTEIN DISULFIDE ISOMERASE"/>
    <property type="match status" value="1"/>
</dbReference>
<dbReference type="PANTHER" id="PTHR18929:SF132">
    <property type="entry name" value="PROTEIN DISULFIDE-ISOMERASE A3"/>
    <property type="match status" value="1"/>
</dbReference>
<dbReference type="Pfam" id="PF00085">
    <property type="entry name" value="Thioredoxin"/>
    <property type="match status" value="2"/>
</dbReference>
<dbReference type="Pfam" id="PF13848">
    <property type="entry name" value="Thioredoxin_6"/>
    <property type="match status" value="1"/>
</dbReference>
<dbReference type="PRINTS" id="PR00421">
    <property type="entry name" value="THIOREDOXIN"/>
</dbReference>
<dbReference type="SUPFAM" id="SSF52833">
    <property type="entry name" value="Thioredoxin-like"/>
    <property type="match status" value="4"/>
</dbReference>
<dbReference type="PROSITE" id="PS00014">
    <property type="entry name" value="ER_TARGET"/>
    <property type="match status" value="1"/>
</dbReference>
<dbReference type="PROSITE" id="PS00194">
    <property type="entry name" value="THIOREDOXIN_1"/>
    <property type="match status" value="2"/>
</dbReference>
<dbReference type="PROSITE" id="PS51352">
    <property type="entry name" value="THIOREDOXIN_2"/>
    <property type="match status" value="2"/>
</dbReference>
<keyword id="KW-1015">Disulfide bond</keyword>
<keyword id="KW-0256">Endoplasmic reticulum</keyword>
<keyword id="KW-0325">Glycoprotein</keyword>
<keyword id="KW-0413">Isomerase</keyword>
<keyword id="KW-0676">Redox-active center</keyword>
<keyword id="KW-1185">Reference proteome</keyword>
<keyword id="KW-0677">Repeat</keyword>
<keyword id="KW-0732">Signal</keyword>